<proteinExistence type="evidence at protein level"/>
<name>5HT1D_HUMAN</name>
<sequence>MSPLNQSAEGLPQEASNRSLNATETSEAWDPRTLQALKISLAVVLSVITLATVLSNAFVLTTILLTRKLHTPANYLIGSLATTDLLVSILVMPISIAYTITHTWNFGQILCDIWLSSDITCCTASILHLCVIALDRYWAITDALEYSKRRTAGHAATMIAIVWAISICISIPPLFWRQAKAQEEMSDCLVNTSQISYTIYSTCGAFYIPSVLLIILYGRIYRAARNRILNPPSLYGKRFTTAHLITGSAGSSLCSLNSSLHEGHSHSAGSPLFFNHVKIKLADSALERKRISAARERKATKILGIILGAFIICWLPFFVVSLVLPICRDSCWIHPALFDFFTWLGYLNSLINPIIYTVFNEEFRQAFQKIVPFRKAS</sequence>
<accession>P28221</accession>
<gene>
    <name evidence="14" type="primary">HTR1D</name>
    <name type="synonym">HTR1DA</name>
    <name type="synonym">HTRL</name>
</gene>
<protein>
    <recommendedName>
        <fullName evidence="11">5-hydroxytryptamine receptor 1D</fullName>
        <shortName evidence="11">5-HT-1D</shortName>
        <shortName evidence="11">5-HT1D</shortName>
    </recommendedName>
    <alternativeName>
        <fullName evidence="11">Serotonin 1D alpha receptor</fullName>
        <shortName evidence="11">5-HT-1D-alpha</shortName>
    </alternativeName>
    <alternativeName>
        <fullName evidence="11">Serotonin receptor 1D</fullName>
    </alternativeName>
</protein>
<feature type="chain" id="PRO_0000068927" description="5-hydroxytryptamine receptor 1D">
    <location>
        <begin position="1"/>
        <end position="377"/>
    </location>
</feature>
<feature type="topological domain" description="Extracellular" evidence="10 15">
    <location>
        <begin position="1"/>
        <end position="38"/>
    </location>
</feature>
<feature type="transmembrane region" description="Helical; Name=1" evidence="10 15">
    <location>
        <begin position="39"/>
        <end position="64"/>
    </location>
</feature>
<feature type="topological domain" description="Cytoplasmic" evidence="10 15">
    <location>
        <begin position="65"/>
        <end position="75"/>
    </location>
</feature>
<feature type="transmembrane region" description="Helical; Name=2" evidence="10 15">
    <location>
        <begin position="76"/>
        <end position="97"/>
    </location>
</feature>
<feature type="topological domain" description="Extracellular" evidence="10 15">
    <location>
        <begin position="98"/>
        <end position="109"/>
    </location>
</feature>
<feature type="transmembrane region" description="Helical; Name=3" evidence="10 15">
    <location>
        <begin position="110"/>
        <end position="134"/>
    </location>
</feature>
<feature type="topological domain" description="Cytoplasmic" evidence="10 15">
    <location>
        <begin position="135"/>
        <end position="154"/>
    </location>
</feature>
<feature type="transmembrane region" description="Helical; Name=4" evidence="10 15">
    <location>
        <begin position="155"/>
        <end position="176"/>
    </location>
</feature>
<feature type="topological domain" description="Extracellular" evidence="10 15">
    <location>
        <begin position="177"/>
        <end position="194"/>
    </location>
</feature>
<feature type="transmembrane region" description="Helical; Name=5" evidence="10 15">
    <location>
        <begin position="195"/>
        <end position="218"/>
    </location>
</feature>
<feature type="topological domain" description="Cytoplasmic" evidence="10 15">
    <location>
        <begin position="219"/>
        <end position="300"/>
    </location>
</feature>
<feature type="transmembrane region" description="Helical; Name=6" evidence="10 15">
    <location>
        <begin position="301"/>
        <end position="326"/>
    </location>
</feature>
<feature type="topological domain" description="Extracellular" evidence="10 15">
    <location>
        <begin position="327"/>
        <end position="335"/>
    </location>
</feature>
<feature type="transmembrane region" description="Helical; Name=7" evidence="10 15">
    <location>
        <begin position="336"/>
        <end position="359"/>
    </location>
</feature>
<feature type="topological domain" description="Cytoplasmic" evidence="10 15">
    <location>
        <begin position="360"/>
        <end position="377"/>
    </location>
</feature>
<feature type="region of interest" description="Disordered" evidence="4">
    <location>
        <begin position="1"/>
        <end position="23"/>
    </location>
</feature>
<feature type="short sequence motif" description="DRY motif; important for ligand-induced conformation changes" evidence="1">
    <location>
        <begin position="135"/>
        <end position="137"/>
    </location>
</feature>
<feature type="short sequence motif" description="NPxxY motif; important for ligand-induced conformation changes and signaling" evidence="1">
    <location>
        <begin position="352"/>
        <end position="356"/>
    </location>
</feature>
<feature type="binding site" evidence="10 15">
    <location>
        <position position="118"/>
    </location>
    <ligand>
        <name>serotonin</name>
        <dbReference type="ChEBI" id="CHEBI:350546"/>
    </ligand>
</feature>
<feature type="binding site" evidence="10 15">
    <location>
        <position position="122"/>
    </location>
    <ligand>
        <name>serotonin</name>
        <dbReference type="ChEBI" id="CHEBI:350546"/>
    </ligand>
</feature>
<feature type="binding site" evidence="10 15">
    <location>
        <position position="321"/>
    </location>
    <ligand>
        <name>serotonin</name>
        <dbReference type="ChEBI" id="CHEBI:350546"/>
    </ligand>
</feature>
<feature type="glycosylation site" description="N-linked (GlcNAc...) asparagine" evidence="2">
    <location>
        <position position="5"/>
    </location>
</feature>
<feature type="glycosylation site" description="N-linked (GlcNAc...) asparagine" evidence="2">
    <location>
        <position position="17"/>
    </location>
</feature>
<feature type="glycosylation site" description="N-linked (GlcNAc...) asparagine" evidence="2">
    <location>
        <position position="21"/>
    </location>
</feature>
<feature type="disulfide bond" evidence="3 10 15">
    <location>
        <begin position="111"/>
        <end position="188"/>
    </location>
</feature>
<feature type="sequence variant" id="VAR_011834" description="In dbSNP:rs6299." evidence="5">
    <original>S</original>
    <variation>L</variation>
    <location>
        <position position="265"/>
    </location>
</feature>
<feature type="helix" evidence="16">
    <location>
        <begin position="36"/>
        <end position="65"/>
    </location>
</feature>
<feature type="helix" evidence="16">
    <location>
        <begin position="67"/>
        <end position="69"/>
    </location>
</feature>
<feature type="helix" evidence="16">
    <location>
        <begin position="72"/>
        <end position="90"/>
    </location>
</feature>
<feature type="helix" evidence="16">
    <location>
        <begin position="92"/>
        <end position="101"/>
    </location>
</feature>
<feature type="helix" evidence="16">
    <location>
        <begin position="107"/>
        <end position="141"/>
    </location>
</feature>
<feature type="helix" evidence="16">
    <location>
        <begin position="143"/>
        <end position="149"/>
    </location>
</feature>
<feature type="helix" evidence="16">
    <location>
        <begin position="152"/>
        <end position="170"/>
    </location>
</feature>
<feature type="helix" evidence="16">
    <location>
        <begin position="172"/>
        <end position="176"/>
    </location>
</feature>
<feature type="helix" evidence="16">
    <location>
        <begin position="195"/>
        <end position="205"/>
    </location>
</feature>
<feature type="helix" evidence="16">
    <location>
        <begin position="207"/>
        <end position="229"/>
    </location>
</feature>
<feature type="helix" evidence="16">
    <location>
        <begin position="285"/>
        <end position="326"/>
    </location>
</feature>
<feature type="strand" evidence="16">
    <location>
        <begin position="328"/>
        <end position="330"/>
    </location>
</feature>
<feature type="helix" evidence="16">
    <location>
        <begin position="335"/>
        <end position="358"/>
    </location>
</feature>
<feature type="helix" evidence="16">
    <location>
        <begin position="361"/>
        <end position="370"/>
    </location>
</feature>
<keyword id="KW-0002">3D-structure</keyword>
<keyword id="KW-1003">Cell membrane</keyword>
<keyword id="KW-1015">Disulfide bond</keyword>
<keyword id="KW-0297">G-protein coupled receptor</keyword>
<keyword id="KW-0325">Glycoprotein</keyword>
<keyword id="KW-0472">Membrane</keyword>
<keyword id="KW-0675">Receptor</keyword>
<keyword id="KW-1185">Reference proteome</keyword>
<keyword id="KW-0807">Transducer</keyword>
<keyword id="KW-0812">Transmembrane</keyword>
<keyword id="KW-1133">Transmembrane helix</keyword>
<dbReference type="EMBL" id="M89955">
    <property type="protein sequence ID" value="AAA35491.1"/>
    <property type="molecule type" value="Genomic_DNA"/>
</dbReference>
<dbReference type="EMBL" id="M81589">
    <property type="protein sequence ID" value="AAA60315.1"/>
    <property type="molecule type" value="mRNA"/>
</dbReference>
<dbReference type="EMBL" id="AF498979">
    <property type="protein sequence ID" value="AAM21126.1"/>
    <property type="molecule type" value="mRNA"/>
</dbReference>
<dbReference type="EMBL" id="BT007027">
    <property type="protein sequence ID" value="AAP35673.1"/>
    <property type="molecule type" value="mRNA"/>
</dbReference>
<dbReference type="EMBL" id="AL049576">
    <property type="status" value="NOT_ANNOTATED_CDS"/>
    <property type="molecule type" value="Genomic_DNA"/>
</dbReference>
<dbReference type="EMBL" id="BC007720">
    <property type="protein sequence ID" value="AAH07720.1"/>
    <property type="molecule type" value="mRNA"/>
</dbReference>
<dbReference type="CCDS" id="CCDS231.1"/>
<dbReference type="PIR" id="A53279">
    <property type="entry name" value="A53279"/>
</dbReference>
<dbReference type="RefSeq" id="NP_000855.1">
    <property type="nucleotide sequence ID" value="NM_000864.5"/>
</dbReference>
<dbReference type="PDB" id="7E32">
    <property type="method" value="EM"/>
    <property type="resolution" value="2.90 A"/>
    <property type="chains" value="R=2-377"/>
</dbReference>
<dbReference type="PDBsum" id="7E32"/>
<dbReference type="EMDB" id="EMD-30974"/>
<dbReference type="SMR" id="P28221"/>
<dbReference type="BioGRID" id="109584">
    <property type="interactions" value="3"/>
</dbReference>
<dbReference type="CORUM" id="P28221"/>
<dbReference type="FunCoup" id="P28221">
    <property type="interactions" value="920"/>
</dbReference>
<dbReference type="STRING" id="9606.ENSP00000363748"/>
<dbReference type="BindingDB" id="P28221"/>
<dbReference type="ChEMBL" id="CHEMBL1983"/>
<dbReference type="DrugBank" id="DB01465">
    <property type="generic name" value="2,5-Dimethoxyamphetamine"/>
</dbReference>
<dbReference type="DrugBank" id="DB01484">
    <property type="generic name" value="4-Bromo-2,5-dimethoxyamphetamine"/>
</dbReference>
<dbReference type="DrugBank" id="DB00918">
    <property type="generic name" value="Almotriptan"/>
</dbReference>
<dbReference type="DrugBank" id="DB00321">
    <property type="generic name" value="Amitriptyline"/>
</dbReference>
<dbReference type="DrugBank" id="DB00714">
    <property type="generic name" value="Apomorphine"/>
</dbReference>
<dbReference type="DrugBank" id="DB01238">
    <property type="generic name" value="Aripiprazole"/>
</dbReference>
<dbReference type="DrugBank" id="DB14185">
    <property type="generic name" value="Aripiprazole lauroxil"/>
</dbReference>
<dbReference type="DrugBank" id="DB01200">
    <property type="generic name" value="Bromocriptine"/>
</dbReference>
<dbReference type="DrugBank" id="DB01445">
    <property type="generic name" value="Bufotenine"/>
</dbReference>
<dbReference type="DrugBank" id="DB00248">
    <property type="generic name" value="Cabergoline"/>
</dbReference>
<dbReference type="DrugBank" id="DB01239">
    <property type="generic name" value="Chlorprothixene"/>
</dbReference>
<dbReference type="DrugBank" id="DB00363">
    <property type="generic name" value="Clozapine"/>
</dbReference>
<dbReference type="DrugBank" id="DB11273">
    <property type="generic name" value="Dihydroergocornine"/>
</dbReference>
<dbReference type="DrugBank" id="DB13345">
    <property type="generic name" value="Dihydroergocristine"/>
</dbReference>
<dbReference type="DrugBank" id="DB00320">
    <property type="generic name" value="Dihydroergotamine"/>
</dbReference>
<dbReference type="DrugBank" id="DB00216">
    <property type="generic name" value="Eletriptan"/>
</dbReference>
<dbReference type="DrugBank" id="DB01049">
    <property type="generic name" value="Ergoloid mesylate"/>
</dbReference>
<dbReference type="DrugBank" id="DB00696">
    <property type="generic name" value="Ergotamine"/>
</dbReference>
<dbReference type="DrugBank" id="DB00574">
    <property type="generic name" value="Fenfluramine"/>
</dbReference>
<dbReference type="DrugBank" id="DB00998">
    <property type="generic name" value="Frovatriptan"/>
</dbReference>
<dbReference type="DrugBank" id="DB12141">
    <property type="generic name" value="Gilteritinib"/>
</dbReference>
<dbReference type="DrugBank" id="DB01221">
    <property type="generic name" value="Ketamine"/>
</dbReference>
<dbReference type="DrugBank" id="DB12540">
    <property type="generic name" value="Lecozotan"/>
</dbReference>
<dbReference type="DrugBank" id="DB00589">
    <property type="generic name" value="Lisuride"/>
</dbReference>
<dbReference type="DrugBank" id="DB04948">
    <property type="generic name" value="Lofexidine"/>
</dbReference>
<dbReference type="DrugBank" id="DB00408">
    <property type="generic name" value="Loxapine"/>
</dbReference>
<dbReference type="DrugBank" id="DB12110">
    <property type="generic name" value="m-Chlorophenylpiperazine"/>
</dbReference>
<dbReference type="DrugBank" id="DB13520">
    <property type="generic name" value="Metergoline"/>
</dbReference>
<dbReference type="DrugBank" id="DB00952">
    <property type="generic name" value="Naratriptan"/>
</dbReference>
<dbReference type="DrugBank" id="DB06096">
    <property type="generic name" value="NXN-188"/>
</dbReference>
<dbReference type="DrugBank" id="DB00334">
    <property type="generic name" value="Olanzapine"/>
</dbReference>
<dbReference type="DrugBank" id="DB00935">
    <property type="generic name" value="Oxymetazoline"/>
</dbReference>
<dbReference type="DrugBank" id="DB01267">
    <property type="generic name" value="Paliperidone"/>
</dbReference>
<dbReference type="DrugBank" id="DB00715">
    <property type="generic name" value="Paroxetine"/>
</dbReference>
<dbReference type="DrugBank" id="DB01186">
    <property type="generic name" value="Pergolide"/>
</dbReference>
<dbReference type="DrugBank" id="DB12288">
    <property type="generic name" value="Piromelatine"/>
</dbReference>
<dbReference type="DrugBank" id="DB01224">
    <property type="generic name" value="Quetiapine"/>
</dbReference>
<dbReference type="DrugBank" id="DB00734">
    <property type="generic name" value="Risperidone"/>
</dbReference>
<dbReference type="DrugBank" id="DB00953">
    <property type="generic name" value="Rizatriptan"/>
</dbReference>
<dbReference type="DrugBank" id="DB08839">
    <property type="generic name" value="Serotonin"/>
</dbReference>
<dbReference type="DrugBank" id="DB09304">
    <property type="generic name" value="Setiptiline"/>
</dbReference>
<dbReference type="DrugBank" id="DB00669">
    <property type="generic name" value="Sumatriptan"/>
</dbReference>
<dbReference type="DrugBank" id="DB13025">
    <property type="generic name" value="Tiapride"/>
</dbReference>
<dbReference type="DrugBank" id="DB06578">
    <property type="generic name" value="Tonabersat"/>
</dbReference>
<dbReference type="DrugBank" id="DB00726">
    <property type="generic name" value="Trimipramine"/>
</dbReference>
<dbReference type="DrugBank" id="DB01392">
    <property type="generic name" value="Yohimbine"/>
</dbReference>
<dbReference type="DrugBank" id="DB00246">
    <property type="generic name" value="Ziprasidone"/>
</dbReference>
<dbReference type="DrugBank" id="DB00315">
    <property type="generic name" value="Zolmitriptan"/>
</dbReference>
<dbReference type="DrugCentral" id="P28221"/>
<dbReference type="GuidetoPHARMACOLOGY" id="3"/>
<dbReference type="GlyCosmos" id="P28221">
    <property type="glycosylation" value="3 sites, No reported glycans"/>
</dbReference>
<dbReference type="GlyGen" id="P28221">
    <property type="glycosylation" value="3 sites"/>
</dbReference>
<dbReference type="iPTMnet" id="P28221"/>
<dbReference type="PhosphoSitePlus" id="P28221"/>
<dbReference type="BioMuta" id="HTR1D"/>
<dbReference type="DMDM" id="112819"/>
<dbReference type="PaxDb" id="9606-ENSP00000363748"/>
<dbReference type="Antibodypedia" id="15559">
    <property type="antibodies" value="225 antibodies from 29 providers"/>
</dbReference>
<dbReference type="DNASU" id="3352"/>
<dbReference type="Ensembl" id="ENST00000374619.2">
    <property type="protein sequence ID" value="ENSP00000363748.1"/>
    <property type="gene ID" value="ENSG00000179546.5"/>
</dbReference>
<dbReference type="GeneID" id="3352"/>
<dbReference type="KEGG" id="hsa:3352"/>
<dbReference type="MANE-Select" id="ENST00000374619.2">
    <property type="protein sequence ID" value="ENSP00000363748.1"/>
    <property type="RefSeq nucleotide sequence ID" value="NM_000864.5"/>
    <property type="RefSeq protein sequence ID" value="NP_000855.1"/>
</dbReference>
<dbReference type="UCSC" id="uc001bgn.3">
    <property type="organism name" value="human"/>
</dbReference>
<dbReference type="AGR" id="HGNC:5289"/>
<dbReference type="CTD" id="3352"/>
<dbReference type="DisGeNET" id="3352"/>
<dbReference type="GeneCards" id="HTR1D"/>
<dbReference type="HGNC" id="HGNC:5289">
    <property type="gene designation" value="HTR1D"/>
</dbReference>
<dbReference type="HPA" id="ENSG00000179546">
    <property type="expression patterns" value="Group enriched (brain, intestine)"/>
</dbReference>
<dbReference type="MIM" id="182133">
    <property type="type" value="gene"/>
</dbReference>
<dbReference type="neXtProt" id="NX_P28221"/>
<dbReference type="OpenTargets" id="ENSG00000179546"/>
<dbReference type="PharmGKB" id="PA29550"/>
<dbReference type="VEuPathDB" id="HostDB:ENSG00000179546"/>
<dbReference type="eggNOG" id="KOG3656">
    <property type="taxonomic scope" value="Eukaryota"/>
</dbReference>
<dbReference type="GeneTree" id="ENSGT00940000154484"/>
<dbReference type="HOGENOM" id="CLU_009579_11_1_1"/>
<dbReference type="InParanoid" id="P28221"/>
<dbReference type="OMA" id="VWMISIS"/>
<dbReference type="OrthoDB" id="5956310at2759"/>
<dbReference type="PAN-GO" id="P28221">
    <property type="GO annotations" value="8 GO annotations based on evolutionary models"/>
</dbReference>
<dbReference type="PhylomeDB" id="P28221"/>
<dbReference type="TreeFam" id="TF316350"/>
<dbReference type="PathwayCommons" id="P28221"/>
<dbReference type="Reactome" id="R-HSA-390666">
    <property type="pathway name" value="Serotonin receptors"/>
</dbReference>
<dbReference type="Reactome" id="R-HSA-418594">
    <property type="pathway name" value="G alpha (i) signalling events"/>
</dbReference>
<dbReference type="SignaLink" id="P28221"/>
<dbReference type="SIGNOR" id="P28221"/>
<dbReference type="BioGRID-ORCS" id="3352">
    <property type="hits" value="8 hits in 1156 CRISPR screens"/>
</dbReference>
<dbReference type="GeneWiki" id="5-HT1D_receptor"/>
<dbReference type="GenomeRNAi" id="3352"/>
<dbReference type="Pharos" id="P28221">
    <property type="development level" value="Tclin"/>
</dbReference>
<dbReference type="PRO" id="PR:P28221"/>
<dbReference type="Proteomes" id="UP000005640">
    <property type="component" value="Chromosome 1"/>
</dbReference>
<dbReference type="RNAct" id="P28221">
    <property type="molecule type" value="protein"/>
</dbReference>
<dbReference type="Bgee" id="ENSG00000179546">
    <property type="expression patterns" value="Expressed in male germ line stem cell (sensu Vertebrata) in testis and 57 other cell types or tissues"/>
</dbReference>
<dbReference type="GO" id="GO:0030425">
    <property type="term" value="C:dendrite"/>
    <property type="evidence" value="ECO:0000318"/>
    <property type="project" value="GO_Central"/>
</dbReference>
<dbReference type="GO" id="GO:0005886">
    <property type="term" value="C:plasma membrane"/>
    <property type="evidence" value="ECO:0000314"/>
    <property type="project" value="UniProtKB"/>
</dbReference>
<dbReference type="GO" id="GO:0045202">
    <property type="term" value="C:synapse"/>
    <property type="evidence" value="ECO:0007669"/>
    <property type="project" value="GOC"/>
</dbReference>
<dbReference type="GO" id="GO:0004993">
    <property type="term" value="F:G protein-coupled serotonin receptor activity"/>
    <property type="evidence" value="ECO:0000315"/>
    <property type="project" value="UniProtKB"/>
</dbReference>
<dbReference type="GO" id="GO:0001586">
    <property type="term" value="F:Gi/o-coupled serotonin receptor activity"/>
    <property type="evidence" value="ECO:0000314"/>
    <property type="project" value="UniProtKB"/>
</dbReference>
<dbReference type="GO" id="GO:0030594">
    <property type="term" value="F:neurotransmitter receptor activity"/>
    <property type="evidence" value="ECO:0000318"/>
    <property type="project" value="GO_Central"/>
</dbReference>
<dbReference type="GO" id="GO:0099589">
    <property type="term" value="F:serotonin receptor activity"/>
    <property type="evidence" value="ECO:0000314"/>
    <property type="project" value="UniProt"/>
</dbReference>
<dbReference type="GO" id="GO:0007193">
    <property type="term" value="P:adenylate cyclase-inhibiting G protein-coupled receptor signaling pathway"/>
    <property type="evidence" value="ECO:0000315"/>
    <property type="project" value="UniProtKB"/>
</dbReference>
<dbReference type="GO" id="GO:0007198">
    <property type="term" value="P:adenylate cyclase-inhibiting serotonin receptor signaling pathway"/>
    <property type="evidence" value="ECO:0000314"/>
    <property type="project" value="UniProtKB"/>
</dbReference>
<dbReference type="GO" id="GO:0007268">
    <property type="term" value="P:chemical synaptic transmission"/>
    <property type="evidence" value="ECO:0000318"/>
    <property type="project" value="GO_Central"/>
</dbReference>
<dbReference type="GO" id="GO:0007187">
    <property type="term" value="P:G protein-coupled receptor signaling pathway, coupled to cyclic nucleotide second messenger"/>
    <property type="evidence" value="ECO:0000318"/>
    <property type="project" value="GO_Central"/>
</dbReference>
<dbReference type="GO" id="GO:0014827">
    <property type="term" value="P:intestine smooth muscle contraction"/>
    <property type="evidence" value="ECO:0000315"/>
    <property type="project" value="UniProtKB"/>
</dbReference>
<dbReference type="GO" id="GO:0050795">
    <property type="term" value="P:regulation of behavior"/>
    <property type="evidence" value="ECO:0007669"/>
    <property type="project" value="InterPro"/>
</dbReference>
<dbReference type="GO" id="GO:0040012">
    <property type="term" value="P:regulation of locomotion"/>
    <property type="evidence" value="ECO:0007669"/>
    <property type="project" value="InterPro"/>
</dbReference>
<dbReference type="GO" id="GO:0042310">
    <property type="term" value="P:vasoconstriction"/>
    <property type="evidence" value="ECO:0007669"/>
    <property type="project" value="InterPro"/>
</dbReference>
<dbReference type="CDD" id="cd15333">
    <property type="entry name" value="7tmA_5-HT1B_1D"/>
    <property type="match status" value="1"/>
</dbReference>
<dbReference type="Gene3D" id="1.20.1070.10">
    <property type="entry name" value="Rhodopsin 7-helix transmembrane proteins"/>
    <property type="match status" value="1"/>
</dbReference>
<dbReference type="InterPro" id="IPR000505">
    <property type="entry name" value="5HT1D_rcpt"/>
</dbReference>
<dbReference type="InterPro" id="IPR002231">
    <property type="entry name" value="5HT_rcpt"/>
</dbReference>
<dbReference type="InterPro" id="IPR000276">
    <property type="entry name" value="GPCR_Rhodpsn"/>
</dbReference>
<dbReference type="InterPro" id="IPR017452">
    <property type="entry name" value="GPCR_Rhodpsn_7TM"/>
</dbReference>
<dbReference type="PANTHER" id="PTHR24248:SF196">
    <property type="entry name" value="5-HYDROXYTRYPTAMINE RECEPTOR 1D"/>
    <property type="match status" value="1"/>
</dbReference>
<dbReference type="PANTHER" id="PTHR24248">
    <property type="entry name" value="ADRENERGIC RECEPTOR-RELATED G-PROTEIN COUPLED RECEPTOR"/>
    <property type="match status" value="1"/>
</dbReference>
<dbReference type="Pfam" id="PF00001">
    <property type="entry name" value="7tm_1"/>
    <property type="match status" value="1"/>
</dbReference>
<dbReference type="PRINTS" id="PR00514">
    <property type="entry name" value="5HT1DRECEPTR"/>
</dbReference>
<dbReference type="PRINTS" id="PR01101">
    <property type="entry name" value="5HTRECEPTOR"/>
</dbReference>
<dbReference type="PRINTS" id="PR00237">
    <property type="entry name" value="GPCRRHODOPSN"/>
</dbReference>
<dbReference type="SMART" id="SM01381">
    <property type="entry name" value="7TM_GPCR_Srsx"/>
    <property type="match status" value="1"/>
</dbReference>
<dbReference type="SUPFAM" id="SSF81321">
    <property type="entry name" value="Family A G protein-coupled receptor-like"/>
    <property type="match status" value="1"/>
</dbReference>
<dbReference type="PROSITE" id="PS00237">
    <property type="entry name" value="G_PROTEIN_RECEP_F1_1"/>
    <property type="match status" value="1"/>
</dbReference>
<dbReference type="PROSITE" id="PS50262">
    <property type="entry name" value="G_PROTEIN_RECEP_F1_2"/>
    <property type="match status" value="1"/>
</dbReference>
<organism>
    <name type="scientific">Homo sapiens</name>
    <name type="common">Human</name>
    <dbReference type="NCBI Taxonomy" id="9606"/>
    <lineage>
        <taxon>Eukaryota</taxon>
        <taxon>Metazoa</taxon>
        <taxon>Chordata</taxon>
        <taxon>Craniata</taxon>
        <taxon>Vertebrata</taxon>
        <taxon>Euteleostomi</taxon>
        <taxon>Mammalia</taxon>
        <taxon>Eutheria</taxon>
        <taxon>Euarchontoglires</taxon>
        <taxon>Primates</taxon>
        <taxon>Haplorrhini</taxon>
        <taxon>Catarrhini</taxon>
        <taxon>Hominidae</taxon>
        <taxon>Homo</taxon>
    </lineage>
</organism>
<comment type="function">
    <text evidence="6 7 8 10 12 13">G-protein coupled receptor for 5-hydroxytryptamine (serotonin) (PubMed:10452531, PubMed:1565658, PubMed:1652050, PubMed:33762731). Also functions as a receptor for ergot alkaloid derivatives, various anxiolytic and antidepressant drugs and other psychoactive substances (PubMed:10452531, PubMed:1565658, PubMed:1652050, PubMed:33762731). Ligand binding causes a conformation change that triggers signaling via guanine nucleotide-binding proteins (G proteins) and modulates the activity of downstream effectors, such as adenylate cyclase (PubMed:10452531, PubMed:1565658, PubMed:1652050, PubMed:33762731). HTR1D is coupled to G(i)/G(o) G alpha proteins and mediates inhibitory neurotransmission by inhibiting adenylate cyclase activity (PubMed:33762731). Regulates the release of 5-hydroxytryptamine in the brain, and thereby affects neural activity (PubMed:18476671, PubMed:20945968). May also play a role in regulating the release of other neurotransmitters (PubMed:18476671, PubMed:20945968). May play a role in vasoconstriction (PubMed:18476671, PubMed:20945968).</text>
</comment>
<comment type="subunit">
    <text evidence="6">Homodimer. Heterodimer with HTR1B.</text>
</comment>
<comment type="subcellular location">
    <subcellularLocation>
        <location evidence="6 7 8">Cell membrane</location>
        <topology evidence="6 7 8">Multi-pass membrane protein</topology>
    </subcellularLocation>
</comment>
<comment type="tissue specificity">
    <text evidence="9">Detected in brain neocortex and caudate nucleus (at protein level).</text>
</comment>
<comment type="similarity">
    <text evidence="3">Belongs to the G-protein coupled receptor 1 family.</text>
</comment>
<evidence type="ECO:0000250" key="1">
    <source>
        <dbReference type="UniProtKB" id="P41595"/>
    </source>
</evidence>
<evidence type="ECO:0000255" key="2"/>
<evidence type="ECO:0000255" key="3">
    <source>
        <dbReference type="PROSITE-ProRule" id="PRU00521"/>
    </source>
</evidence>
<evidence type="ECO:0000256" key="4">
    <source>
        <dbReference type="SAM" id="MobiDB-lite"/>
    </source>
</evidence>
<evidence type="ECO:0000269" key="5">
    <source>
    </source>
</evidence>
<evidence type="ECO:0000269" key="6">
    <source>
    </source>
</evidence>
<evidence type="ECO:0000269" key="7">
    <source>
    </source>
</evidence>
<evidence type="ECO:0000269" key="8">
    <source>
    </source>
</evidence>
<evidence type="ECO:0000269" key="9">
    <source>
    </source>
</evidence>
<evidence type="ECO:0000269" key="10">
    <source>
    </source>
</evidence>
<evidence type="ECO:0000303" key="11">
    <source>
    </source>
</evidence>
<evidence type="ECO:0000303" key="12">
    <source>
    </source>
</evidence>
<evidence type="ECO:0000303" key="13">
    <source>
    </source>
</evidence>
<evidence type="ECO:0000312" key="14">
    <source>
        <dbReference type="HGNC" id="HGNC:5289"/>
    </source>
</evidence>
<evidence type="ECO:0007744" key="15">
    <source>
        <dbReference type="PDB" id="7E32"/>
    </source>
</evidence>
<evidence type="ECO:0007829" key="16">
    <source>
        <dbReference type="PDB" id="7E32"/>
    </source>
</evidence>
<reference key="1">
    <citation type="journal article" date="1991" name="Mol. Pharmacol.">
        <title>Primary structure and functional characterization of a human 5-HT1D-type serotonin receptor.</title>
        <authorList>
            <person name="Hamblin M.W."/>
            <person name="Metcalf M.A."/>
        </authorList>
    </citation>
    <scope>NUCLEOTIDE SEQUENCE [GENOMIC DNA]</scope>
    <scope>FUNCTION</scope>
    <scope>SUBCELLULAR LOCATION</scope>
</reference>
<reference key="2">
    <citation type="journal article" date="1992" name="Proc. Natl. Acad. Sci. U.S.A.">
        <title>Human serotonin 1D receptor is encoded by a subfamily of two distinct genes: 5-HT1D alpha and 5-HT1D beta.</title>
        <authorList>
            <person name="Weinshank R.L."/>
            <person name="Zgombick J.M."/>
            <person name="Macchi M.J."/>
            <person name="Branchek T.A."/>
            <person name="Hartig P.R."/>
        </authorList>
    </citation>
    <scope>NUCLEOTIDE SEQUENCE [MRNA]</scope>
    <scope>FUNCTION</scope>
    <scope>SUBCELLULAR LOCATION</scope>
    <source>
        <tissue>Placenta</tissue>
    </source>
</reference>
<reference key="3">
    <citation type="submission" date="2002-04" db="EMBL/GenBank/DDBJ databases">
        <title>cDNA clones of human proteins involved in signal transduction sequenced by the Guthrie cDNA resource center (www.cdna.org).</title>
        <authorList>
            <person name="Puhl H.L. III"/>
            <person name="Ikeda S.R."/>
            <person name="Aronstam R.S."/>
        </authorList>
    </citation>
    <scope>NUCLEOTIDE SEQUENCE [LARGE SCALE MRNA]</scope>
</reference>
<reference key="4">
    <citation type="submission" date="2003-05" db="EMBL/GenBank/DDBJ databases">
        <title>Cloning of human full-length CDSs in BD Creator(TM) system donor vector.</title>
        <authorList>
            <person name="Kalnine N."/>
            <person name="Chen X."/>
            <person name="Rolfs A."/>
            <person name="Halleck A."/>
            <person name="Hines L."/>
            <person name="Eisenstein S."/>
            <person name="Koundinya M."/>
            <person name="Raphael J."/>
            <person name="Moreira D."/>
            <person name="Kelley T."/>
            <person name="LaBaer J."/>
            <person name="Lin Y."/>
            <person name="Phelan M."/>
            <person name="Farmer A."/>
        </authorList>
    </citation>
    <scope>NUCLEOTIDE SEQUENCE [LARGE SCALE MRNA]</scope>
</reference>
<reference key="5">
    <citation type="journal article" date="2006" name="Nature">
        <title>The DNA sequence and biological annotation of human chromosome 1.</title>
        <authorList>
            <person name="Gregory S.G."/>
            <person name="Barlow K.F."/>
            <person name="McLay K.E."/>
            <person name="Kaul R."/>
            <person name="Swarbreck D."/>
            <person name="Dunham A."/>
            <person name="Scott C.E."/>
            <person name="Howe K.L."/>
            <person name="Woodfine K."/>
            <person name="Spencer C.C.A."/>
            <person name="Jones M.C."/>
            <person name="Gillson C."/>
            <person name="Searle S."/>
            <person name="Zhou Y."/>
            <person name="Kokocinski F."/>
            <person name="McDonald L."/>
            <person name="Evans R."/>
            <person name="Phillips K."/>
            <person name="Atkinson A."/>
            <person name="Cooper R."/>
            <person name="Jones C."/>
            <person name="Hall R.E."/>
            <person name="Andrews T.D."/>
            <person name="Lloyd C."/>
            <person name="Ainscough R."/>
            <person name="Almeida J.P."/>
            <person name="Ambrose K.D."/>
            <person name="Anderson F."/>
            <person name="Andrew R.W."/>
            <person name="Ashwell R.I.S."/>
            <person name="Aubin K."/>
            <person name="Babbage A.K."/>
            <person name="Bagguley C.L."/>
            <person name="Bailey J."/>
            <person name="Beasley H."/>
            <person name="Bethel G."/>
            <person name="Bird C.P."/>
            <person name="Bray-Allen S."/>
            <person name="Brown J.Y."/>
            <person name="Brown A.J."/>
            <person name="Buckley D."/>
            <person name="Burton J."/>
            <person name="Bye J."/>
            <person name="Carder C."/>
            <person name="Chapman J.C."/>
            <person name="Clark S.Y."/>
            <person name="Clarke G."/>
            <person name="Clee C."/>
            <person name="Cobley V."/>
            <person name="Collier R.E."/>
            <person name="Corby N."/>
            <person name="Coville G.J."/>
            <person name="Davies J."/>
            <person name="Deadman R."/>
            <person name="Dunn M."/>
            <person name="Earthrowl M."/>
            <person name="Ellington A.G."/>
            <person name="Errington H."/>
            <person name="Frankish A."/>
            <person name="Frankland J."/>
            <person name="French L."/>
            <person name="Garner P."/>
            <person name="Garnett J."/>
            <person name="Gay L."/>
            <person name="Ghori M.R.J."/>
            <person name="Gibson R."/>
            <person name="Gilby L.M."/>
            <person name="Gillett W."/>
            <person name="Glithero R.J."/>
            <person name="Grafham D.V."/>
            <person name="Griffiths C."/>
            <person name="Griffiths-Jones S."/>
            <person name="Grocock R."/>
            <person name="Hammond S."/>
            <person name="Harrison E.S.I."/>
            <person name="Hart E."/>
            <person name="Haugen E."/>
            <person name="Heath P.D."/>
            <person name="Holmes S."/>
            <person name="Holt K."/>
            <person name="Howden P.J."/>
            <person name="Hunt A.R."/>
            <person name="Hunt S.E."/>
            <person name="Hunter G."/>
            <person name="Isherwood J."/>
            <person name="James R."/>
            <person name="Johnson C."/>
            <person name="Johnson D."/>
            <person name="Joy A."/>
            <person name="Kay M."/>
            <person name="Kershaw J.K."/>
            <person name="Kibukawa M."/>
            <person name="Kimberley A.M."/>
            <person name="King A."/>
            <person name="Knights A.J."/>
            <person name="Lad H."/>
            <person name="Laird G."/>
            <person name="Lawlor S."/>
            <person name="Leongamornlert D.A."/>
            <person name="Lloyd D.M."/>
            <person name="Loveland J."/>
            <person name="Lovell J."/>
            <person name="Lush M.J."/>
            <person name="Lyne R."/>
            <person name="Martin S."/>
            <person name="Mashreghi-Mohammadi M."/>
            <person name="Matthews L."/>
            <person name="Matthews N.S.W."/>
            <person name="McLaren S."/>
            <person name="Milne S."/>
            <person name="Mistry S."/>
            <person name="Moore M.J.F."/>
            <person name="Nickerson T."/>
            <person name="O'Dell C.N."/>
            <person name="Oliver K."/>
            <person name="Palmeiri A."/>
            <person name="Palmer S.A."/>
            <person name="Parker A."/>
            <person name="Patel D."/>
            <person name="Pearce A.V."/>
            <person name="Peck A.I."/>
            <person name="Pelan S."/>
            <person name="Phelps K."/>
            <person name="Phillimore B.J."/>
            <person name="Plumb R."/>
            <person name="Rajan J."/>
            <person name="Raymond C."/>
            <person name="Rouse G."/>
            <person name="Saenphimmachak C."/>
            <person name="Sehra H.K."/>
            <person name="Sheridan E."/>
            <person name="Shownkeen R."/>
            <person name="Sims S."/>
            <person name="Skuce C.D."/>
            <person name="Smith M."/>
            <person name="Steward C."/>
            <person name="Subramanian S."/>
            <person name="Sycamore N."/>
            <person name="Tracey A."/>
            <person name="Tromans A."/>
            <person name="Van Helmond Z."/>
            <person name="Wall M."/>
            <person name="Wallis J.M."/>
            <person name="White S."/>
            <person name="Whitehead S.L."/>
            <person name="Wilkinson J.E."/>
            <person name="Willey D.L."/>
            <person name="Williams H."/>
            <person name="Wilming L."/>
            <person name="Wray P.W."/>
            <person name="Wu Z."/>
            <person name="Coulson A."/>
            <person name="Vaudin M."/>
            <person name="Sulston J.E."/>
            <person name="Durbin R.M."/>
            <person name="Hubbard T."/>
            <person name="Wooster R."/>
            <person name="Dunham I."/>
            <person name="Carter N.P."/>
            <person name="McVean G."/>
            <person name="Ross M.T."/>
            <person name="Harrow J."/>
            <person name="Olson M.V."/>
            <person name="Beck S."/>
            <person name="Rogers J."/>
            <person name="Bentley D.R."/>
        </authorList>
    </citation>
    <scope>NUCLEOTIDE SEQUENCE [LARGE SCALE GENOMIC DNA]</scope>
</reference>
<reference key="6">
    <citation type="journal article" date="2004" name="Genome Res.">
        <title>The status, quality, and expansion of the NIH full-length cDNA project: the Mammalian Gene Collection (MGC).</title>
        <authorList>
            <consortium name="The MGC Project Team"/>
        </authorList>
    </citation>
    <scope>NUCLEOTIDE SEQUENCE [LARGE SCALE MRNA]</scope>
    <source>
        <tissue>Eye</tissue>
    </source>
</reference>
<reference key="7">
    <citation type="journal article" date="1991" name="Exp. Neurol.">
        <title>Postsynaptic localization of 5-HT1D receptor binding sites in human caudate.</title>
        <authorList>
            <person name="Gonzalez-Heydrich J."/>
            <person name="Peroutka S.J."/>
        </authorList>
    </citation>
    <scope>TISSUE SPECIFICITY</scope>
</reference>
<reference key="8">
    <citation type="journal article" date="1999" name="FEBS Lett.">
        <title>Serotonin 5-HT1B and 5-HT1D receptors form homodimers when expressed alone and heterodimers when co-expressed.</title>
        <authorList>
            <person name="Xie Z."/>
            <person name="Lee S.P."/>
            <person name="O'Dowd B.F."/>
            <person name="George S.R."/>
        </authorList>
    </citation>
    <scope>FUNCTION</scope>
    <scope>SUBUNIT</scope>
    <scope>SUBCELLULAR LOCATION</scope>
</reference>
<reference key="9">
    <citation type="journal article" date="2008" name="Chem. Rev.">
        <title>Serotonin receptors.</title>
        <authorList>
            <person name="Nichols D.E."/>
            <person name="Nichols C.D."/>
        </authorList>
    </citation>
    <scope>REVIEW</scope>
</reference>
<reference key="10">
    <citation type="journal article" date="2011" name="Physiol. Res.">
        <title>Serotonin receptors - from molecular biology to clinical applications.</title>
        <authorList>
            <person name="Pytliak M."/>
            <person name="Vargova V."/>
            <person name="Mechirova V."/>
            <person name="Felsoci M."/>
        </authorList>
    </citation>
    <scope>REVIEW</scope>
</reference>
<reference evidence="15" key="11">
    <citation type="journal article" date="2021" name="Nature">
        <title>Structural insights into the lipid and ligand regulation of serotonin receptors.</title>
        <authorList>
            <person name="Xu P."/>
            <person name="Huang S."/>
            <person name="Zhang H."/>
            <person name="Mao C."/>
            <person name="Zhou X.E."/>
            <person name="Cheng X."/>
            <person name="Simon I.A."/>
            <person name="Shen D.D."/>
            <person name="Yen H.Y."/>
            <person name="Robinson C.V."/>
            <person name="Harpsoee K."/>
            <person name="Svensson B."/>
            <person name="Guo J."/>
            <person name="Jiang H."/>
            <person name="Gloriam D.E."/>
            <person name="Melcher K."/>
            <person name="Jiang Y."/>
            <person name="Zhang Y."/>
            <person name="Xu H.E."/>
        </authorList>
    </citation>
    <scope>STRUCTURE BY ELECTRON MICROSCOPY (2.99 ANGSTROMS) OF 2-377 IN COMPLEX WITH SEROTONON; GNB1; GNG2 AND GNAI1</scope>
    <scope>DISULFIDE BOND</scope>
    <scope>FUNCTION</scope>
</reference>
<reference key="12">
    <citation type="journal article" date="1999" name="Nat. Genet.">
        <title>Characterization of single-nucleotide polymorphisms in coding regions of human genes.</title>
        <authorList>
            <person name="Cargill M."/>
            <person name="Altshuler D."/>
            <person name="Ireland J."/>
            <person name="Sklar P."/>
            <person name="Ardlie K."/>
            <person name="Patil N."/>
            <person name="Shaw N."/>
            <person name="Lane C.R."/>
            <person name="Lim E.P."/>
            <person name="Kalyanaraman N."/>
            <person name="Nemesh J."/>
            <person name="Ziaugra L."/>
            <person name="Friedland L."/>
            <person name="Rolfe A."/>
            <person name="Warrington J."/>
            <person name="Lipshutz R."/>
            <person name="Daley G.Q."/>
            <person name="Lander E.S."/>
        </authorList>
    </citation>
    <scope>VARIANT LEU-265</scope>
</reference>
<reference key="13">
    <citation type="journal article" date="1999" name="Nat. Genet.">
        <authorList>
            <person name="Cargill M."/>
            <person name="Altshuler D."/>
            <person name="Ireland J."/>
            <person name="Sklar P."/>
            <person name="Ardlie K."/>
            <person name="Patil N."/>
            <person name="Shaw N."/>
            <person name="Lane C.R."/>
            <person name="Lim E.P."/>
            <person name="Kalyanaraman N."/>
            <person name="Nemesh J."/>
            <person name="Ziaugra L."/>
            <person name="Friedland L."/>
            <person name="Rolfe A."/>
            <person name="Warrington J."/>
            <person name="Lipshutz R."/>
            <person name="Daley G.Q."/>
            <person name="Lander E.S."/>
        </authorList>
    </citation>
    <scope>ERRATUM OF PUBMED:10391209</scope>
</reference>